<dbReference type="EC" id="6.3.4.4" evidence="1"/>
<dbReference type="EMBL" id="CP001291">
    <property type="protein sequence ID" value="ACK73100.1"/>
    <property type="molecule type" value="Genomic_DNA"/>
</dbReference>
<dbReference type="RefSeq" id="WP_015956683.1">
    <property type="nucleotide sequence ID" value="NC_011729.1"/>
</dbReference>
<dbReference type="SMR" id="B7KCX9"/>
<dbReference type="STRING" id="65393.PCC7424_4740"/>
<dbReference type="KEGG" id="cyc:PCC7424_4740"/>
<dbReference type="eggNOG" id="COG0104">
    <property type="taxonomic scope" value="Bacteria"/>
</dbReference>
<dbReference type="HOGENOM" id="CLU_029848_0_0_3"/>
<dbReference type="OrthoDB" id="9807553at2"/>
<dbReference type="UniPathway" id="UPA00075">
    <property type="reaction ID" value="UER00335"/>
</dbReference>
<dbReference type="Proteomes" id="UP000002384">
    <property type="component" value="Chromosome"/>
</dbReference>
<dbReference type="GO" id="GO:0005737">
    <property type="term" value="C:cytoplasm"/>
    <property type="evidence" value="ECO:0007669"/>
    <property type="project" value="UniProtKB-SubCell"/>
</dbReference>
<dbReference type="GO" id="GO:0004019">
    <property type="term" value="F:adenylosuccinate synthase activity"/>
    <property type="evidence" value="ECO:0007669"/>
    <property type="project" value="UniProtKB-UniRule"/>
</dbReference>
<dbReference type="GO" id="GO:0005525">
    <property type="term" value="F:GTP binding"/>
    <property type="evidence" value="ECO:0007669"/>
    <property type="project" value="UniProtKB-UniRule"/>
</dbReference>
<dbReference type="GO" id="GO:0000287">
    <property type="term" value="F:magnesium ion binding"/>
    <property type="evidence" value="ECO:0007669"/>
    <property type="project" value="UniProtKB-UniRule"/>
</dbReference>
<dbReference type="GO" id="GO:0044208">
    <property type="term" value="P:'de novo' AMP biosynthetic process"/>
    <property type="evidence" value="ECO:0007669"/>
    <property type="project" value="UniProtKB-UniRule"/>
</dbReference>
<dbReference type="GO" id="GO:0046040">
    <property type="term" value="P:IMP metabolic process"/>
    <property type="evidence" value="ECO:0007669"/>
    <property type="project" value="TreeGrafter"/>
</dbReference>
<dbReference type="CDD" id="cd03108">
    <property type="entry name" value="AdSS"/>
    <property type="match status" value="1"/>
</dbReference>
<dbReference type="FunFam" id="1.10.300.10:FF:000001">
    <property type="entry name" value="Adenylosuccinate synthetase"/>
    <property type="match status" value="1"/>
</dbReference>
<dbReference type="FunFam" id="3.90.170.10:FF:000001">
    <property type="entry name" value="Adenylosuccinate synthetase"/>
    <property type="match status" value="1"/>
</dbReference>
<dbReference type="Gene3D" id="3.40.440.10">
    <property type="entry name" value="Adenylosuccinate Synthetase, subunit A, domain 1"/>
    <property type="match status" value="1"/>
</dbReference>
<dbReference type="Gene3D" id="1.10.300.10">
    <property type="entry name" value="Adenylosuccinate Synthetase, subunit A, domain 2"/>
    <property type="match status" value="1"/>
</dbReference>
<dbReference type="Gene3D" id="3.90.170.10">
    <property type="entry name" value="Adenylosuccinate Synthetase, subunit A, domain 3"/>
    <property type="match status" value="1"/>
</dbReference>
<dbReference type="HAMAP" id="MF_00011">
    <property type="entry name" value="Adenylosucc_synth"/>
    <property type="match status" value="1"/>
</dbReference>
<dbReference type="InterPro" id="IPR018220">
    <property type="entry name" value="Adenylosuccin_syn_GTP-bd"/>
</dbReference>
<dbReference type="InterPro" id="IPR033128">
    <property type="entry name" value="Adenylosuccin_syn_Lys_AS"/>
</dbReference>
<dbReference type="InterPro" id="IPR042109">
    <property type="entry name" value="Adenylosuccinate_synth_dom1"/>
</dbReference>
<dbReference type="InterPro" id="IPR042110">
    <property type="entry name" value="Adenylosuccinate_synth_dom2"/>
</dbReference>
<dbReference type="InterPro" id="IPR042111">
    <property type="entry name" value="Adenylosuccinate_synth_dom3"/>
</dbReference>
<dbReference type="InterPro" id="IPR001114">
    <property type="entry name" value="Adenylosuccinate_synthetase"/>
</dbReference>
<dbReference type="InterPro" id="IPR027417">
    <property type="entry name" value="P-loop_NTPase"/>
</dbReference>
<dbReference type="NCBIfam" id="NF002223">
    <property type="entry name" value="PRK01117.1"/>
    <property type="match status" value="1"/>
</dbReference>
<dbReference type="NCBIfam" id="TIGR00184">
    <property type="entry name" value="purA"/>
    <property type="match status" value="1"/>
</dbReference>
<dbReference type="PANTHER" id="PTHR11846">
    <property type="entry name" value="ADENYLOSUCCINATE SYNTHETASE"/>
    <property type="match status" value="1"/>
</dbReference>
<dbReference type="PANTHER" id="PTHR11846:SF0">
    <property type="entry name" value="ADENYLOSUCCINATE SYNTHETASE"/>
    <property type="match status" value="1"/>
</dbReference>
<dbReference type="Pfam" id="PF00709">
    <property type="entry name" value="Adenylsucc_synt"/>
    <property type="match status" value="1"/>
</dbReference>
<dbReference type="SMART" id="SM00788">
    <property type="entry name" value="Adenylsucc_synt"/>
    <property type="match status" value="1"/>
</dbReference>
<dbReference type="SUPFAM" id="SSF52540">
    <property type="entry name" value="P-loop containing nucleoside triphosphate hydrolases"/>
    <property type="match status" value="1"/>
</dbReference>
<dbReference type="PROSITE" id="PS01266">
    <property type="entry name" value="ADENYLOSUCCIN_SYN_1"/>
    <property type="match status" value="1"/>
</dbReference>
<dbReference type="PROSITE" id="PS00513">
    <property type="entry name" value="ADENYLOSUCCIN_SYN_2"/>
    <property type="match status" value="1"/>
</dbReference>
<name>PURA_GLOC7</name>
<organism>
    <name type="scientific">Gloeothece citriformis (strain PCC 7424)</name>
    <name type="common">Cyanothece sp. (strain PCC 7424)</name>
    <dbReference type="NCBI Taxonomy" id="65393"/>
    <lineage>
        <taxon>Bacteria</taxon>
        <taxon>Bacillati</taxon>
        <taxon>Cyanobacteriota</taxon>
        <taxon>Cyanophyceae</taxon>
        <taxon>Oscillatoriophycideae</taxon>
        <taxon>Chroococcales</taxon>
        <taxon>Aphanothecaceae</taxon>
        <taxon>Gloeothece</taxon>
        <taxon>Gloeothece citriformis</taxon>
    </lineage>
</organism>
<evidence type="ECO:0000255" key="1">
    <source>
        <dbReference type="HAMAP-Rule" id="MF_00011"/>
    </source>
</evidence>
<accession>B7KCX9</accession>
<sequence>MANVIVIGAQWGDEGKGKITDLLSRSADVVVRSQGGVNAGHTVVVQGQTFKLHLIPSGILYPDTECIIGSGTVIDPSVLLEEMEQLHALNVSTENLFISQTAHITMPYHRLIDRASEERRGKYKLGTTGRGIGPTYADKSERTGIRVVDLMNGDDLQEKIEWTINYKNAILEKLYNLSPLDPKQVIDEYRGYAEQLRSYVIDSSLKIYEAIQQKKNILFEGAQGTLLDLDHGTYPYVTSSNPIAGGACVGAGIGPTVIDRVIGVAKAYTTRVGEGPFPTELNGEIGELLCDRGAEFGTTTGRRRRCGWFDAVIGRYAVRINGIDCLAITKLDVLDELDEIEVCVAYELDGQICDHFPSDANQFARCQPIYRTLPGWKQSTTNCRSLEDLPKQALDYLKFLAEVMEVSIAIVSLGASRDQTIIVEDPIHGPKRALLDENGVPVSKADTQE</sequence>
<protein>
    <recommendedName>
        <fullName evidence="1">Adenylosuccinate synthetase</fullName>
        <shortName evidence="1">AMPSase</shortName>
        <shortName evidence="1">AdSS</shortName>
        <ecNumber evidence="1">6.3.4.4</ecNumber>
    </recommendedName>
    <alternativeName>
        <fullName evidence="1">IMP--aspartate ligase</fullName>
    </alternativeName>
</protein>
<keyword id="KW-0963">Cytoplasm</keyword>
<keyword id="KW-0342">GTP-binding</keyword>
<keyword id="KW-0436">Ligase</keyword>
<keyword id="KW-0460">Magnesium</keyword>
<keyword id="KW-0479">Metal-binding</keyword>
<keyword id="KW-0547">Nucleotide-binding</keyword>
<keyword id="KW-0658">Purine biosynthesis</keyword>
<keyword id="KW-1185">Reference proteome</keyword>
<proteinExistence type="inferred from homology"/>
<feature type="chain" id="PRO_1000194743" description="Adenylosuccinate synthetase">
    <location>
        <begin position="1"/>
        <end position="449"/>
    </location>
</feature>
<feature type="active site" description="Proton acceptor" evidence="1">
    <location>
        <position position="13"/>
    </location>
</feature>
<feature type="active site" description="Proton donor" evidence="1">
    <location>
        <position position="41"/>
    </location>
</feature>
<feature type="binding site" evidence="1">
    <location>
        <begin position="12"/>
        <end position="18"/>
    </location>
    <ligand>
        <name>GTP</name>
        <dbReference type="ChEBI" id="CHEBI:37565"/>
    </ligand>
</feature>
<feature type="binding site" description="in other chain" evidence="1">
    <location>
        <begin position="13"/>
        <end position="16"/>
    </location>
    <ligand>
        <name>IMP</name>
        <dbReference type="ChEBI" id="CHEBI:58053"/>
        <note>ligand shared between dimeric partners</note>
    </ligand>
</feature>
<feature type="binding site" evidence="1">
    <location>
        <position position="13"/>
    </location>
    <ligand>
        <name>Mg(2+)</name>
        <dbReference type="ChEBI" id="CHEBI:18420"/>
    </ligand>
</feature>
<feature type="binding site" description="in other chain" evidence="1">
    <location>
        <begin position="38"/>
        <end position="41"/>
    </location>
    <ligand>
        <name>IMP</name>
        <dbReference type="ChEBI" id="CHEBI:58053"/>
        <note>ligand shared between dimeric partners</note>
    </ligand>
</feature>
<feature type="binding site" evidence="1">
    <location>
        <begin position="40"/>
        <end position="42"/>
    </location>
    <ligand>
        <name>GTP</name>
        <dbReference type="ChEBI" id="CHEBI:37565"/>
    </ligand>
</feature>
<feature type="binding site" evidence="1">
    <location>
        <position position="40"/>
    </location>
    <ligand>
        <name>Mg(2+)</name>
        <dbReference type="ChEBI" id="CHEBI:18420"/>
    </ligand>
</feature>
<feature type="binding site" description="in other chain" evidence="1">
    <location>
        <position position="128"/>
    </location>
    <ligand>
        <name>IMP</name>
        <dbReference type="ChEBI" id="CHEBI:58053"/>
        <note>ligand shared between dimeric partners</note>
    </ligand>
</feature>
<feature type="binding site" evidence="1">
    <location>
        <position position="142"/>
    </location>
    <ligand>
        <name>IMP</name>
        <dbReference type="ChEBI" id="CHEBI:58053"/>
        <note>ligand shared between dimeric partners</note>
    </ligand>
</feature>
<feature type="binding site" description="in other chain" evidence="1">
    <location>
        <position position="223"/>
    </location>
    <ligand>
        <name>IMP</name>
        <dbReference type="ChEBI" id="CHEBI:58053"/>
        <note>ligand shared between dimeric partners</note>
    </ligand>
</feature>
<feature type="binding site" description="in other chain" evidence="1">
    <location>
        <position position="238"/>
    </location>
    <ligand>
        <name>IMP</name>
        <dbReference type="ChEBI" id="CHEBI:58053"/>
        <note>ligand shared between dimeric partners</note>
    </ligand>
</feature>
<feature type="binding site" evidence="1">
    <location>
        <begin position="298"/>
        <end position="304"/>
    </location>
    <ligand>
        <name>substrate</name>
    </ligand>
</feature>
<feature type="binding site" description="in other chain" evidence="1">
    <location>
        <position position="302"/>
    </location>
    <ligand>
        <name>IMP</name>
        <dbReference type="ChEBI" id="CHEBI:58053"/>
        <note>ligand shared between dimeric partners</note>
    </ligand>
</feature>
<feature type="binding site" evidence="1">
    <location>
        <position position="304"/>
    </location>
    <ligand>
        <name>GTP</name>
        <dbReference type="ChEBI" id="CHEBI:37565"/>
    </ligand>
</feature>
<feature type="binding site" evidence="1">
    <location>
        <begin position="330"/>
        <end position="332"/>
    </location>
    <ligand>
        <name>GTP</name>
        <dbReference type="ChEBI" id="CHEBI:37565"/>
    </ligand>
</feature>
<feature type="binding site" evidence="1">
    <location>
        <begin position="412"/>
        <end position="414"/>
    </location>
    <ligand>
        <name>GTP</name>
        <dbReference type="ChEBI" id="CHEBI:37565"/>
    </ligand>
</feature>
<gene>
    <name evidence="1" type="primary">purA</name>
    <name type="ordered locus">PCC7424_4740</name>
</gene>
<comment type="function">
    <text evidence="1">Plays an important role in the de novo pathway of purine nucleotide biosynthesis. Catalyzes the first committed step in the biosynthesis of AMP from IMP.</text>
</comment>
<comment type="catalytic activity">
    <reaction evidence="1">
        <text>IMP + L-aspartate + GTP = N(6)-(1,2-dicarboxyethyl)-AMP + GDP + phosphate + 2 H(+)</text>
        <dbReference type="Rhea" id="RHEA:15753"/>
        <dbReference type="ChEBI" id="CHEBI:15378"/>
        <dbReference type="ChEBI" id="CHEBI:29991"/>
        <dbReference type="ChEBI" id="CHEBI:37565"/>
        <dbReference type="ChEBI" id="CHEBI:43474"/>
        <dbReference type="ChEBI" id="CHEBI:57567"/>
        <dbReference type="ChEBI" id="CHEBI:58053"/>
        <dbReference type="ChEBI" id="CHEBI:58189"/>
        <dbReference type="EC" id="6.3.4.4"/>
    </reaction>
</comment>
<comment type="cofactor">
    <cofactor evidence="1">
        <name>Mg(2+)</name>
        <dbReference type="ChEBI" id="CHEBI:18420"/>
    </cofactor>
    <text evidence="1">Binds 1 Mg(2+) ion per subunit.</text>
</comment>
<comment type="pathway">
    <text evidence="1">Purine metabolism; AMP biosynthesis via de novo pathway; AMP from IMP: step 1/2.</text>
</comment>
<comment type="subunit">
    <text evidence="1">Homodimer.</text>
</comment>
<comment type="subcellular location">
    <subcellularLocation>
        <location evidence="1">Cytoplasm</location>
    </subcellularLocation>
</comment>
<comment type="similarity">
    <text evidence="1">Belongs to the adenylosuccinate synthetase family.</text>
</comment>
<reference key="1">
    <citation type="journal article" date="2011" name="MBio">
        <title>Novel metabolic attributes of the genus Cyanothece, comprising a group of unicellular nitrogen-fixing Cyanobacteria.</title>
        <authorList>
            <person name="Bandyopadhyay A."/>
            <person name="Elvitigala T."/>
            <person name="Welsh E."/>
            <person name="Stockel J."/>
            <person name="Liberton M."/>
            <person name="Min H."/>
            <person name="Sherman L.A."/>
            <person name="Pakrasi H.B."/>
        </authorList>
    </citation>
    <scope>NUCLEOTIDE SEQUENCE [LARGE SCALE GENOMIC DNA]</scope>
    <source>
        <strain>PCC 7424</strain>
    </source>
</reference>